<accession>Q65TL1</accession>
<comment type="similarity">
    <text evidence="1">Belongs to the UPF0339 family. Duplicated subfamily.</text>
</comment>
<feature type="chain" id="PRO_0000218138" description="UPF0339 protein MS1092">
    <location>
        <begin position="1"/>
        <end position="113"/>
    </location>
</feature>
<feature type="repeat" description="1">
    <location>
        <begin position="11"/>
        <end position="59"/>
    </location>
</feature>
<feature type="repeat" description="2">
    <location>
        <begin position="62"/>
        <end position="110"/>
    </location>
</feature>
<evidence type="ECO:0000305" key="1"/>
<gene>
    <name type="ordered locus">MS1092</name>
</gene>
<keyword id="KW-0677">Repeat</keyword>
<organism>
    <name type="scientific">Mannheimia succiniciproducens (strain KCTC 0769BP / MBEL55E)</name>
    <dbReference type="NCBI Taxonomy" id="221988"/>
    <lineage>
        <taxon>Bacteria</taxon>
        <taxon>Pseudomonadati</taxon>
        <taxon>Pseudomonadota</taxon>
        <taxon>Gammaproteobacteria</taxon>
        <taxon>Pasteurellales</taxon>
        <taxon>Pasteurellaceae</taxon>
        <taxon>Basfia</taxon>
    </lineage>
</organism>
<name>Y1092_MANSM</name>
<sequence>MALGWYELKLAKDGQFMFNLKAANSQVILTSELYRSRAAAENGIASVQKNGGDEKNFEFRENKNGEPYFILKAQNHQEIGRSEYYSSKAAAQNGVNSVMNNAATTVIKDITKS</sequence>
<proteinExistence type="inferred from homology"/>
<reference key="1">
    <citation type="journal article" date="2004" name="Nat. Biotechnol.">
        <title>The genome sequence of the capnophilic rumen bacterium Mannheimia succiniciproducens.</title>
        <authorList>
            <person name="Hong S.H."/>
            <person name="Kim J.S."/>
            <person name="Lee S.Y."/>
            <person name="In Y.H."/>
            <person name="Choi S.S."/>
            <person name="Rih J.-K."/>
            <person name="Kim C.H."/>
            <person name="Jeong H."/>
            <person name="Hur C.G."/>
            <person name="Kim J.J."/>
        </authorList>
    </citation>
    <scope>NUCLEOTIDE SEQUENCE [LARGE SCALE GENOMIC DNA]</scope>
    <source>
        <strain>KCTC 0769BP / MBEL55E</strain>
    </source>
</reference>
<dbReference type="EMBL" id="AE016827">
    <property type="protein sequence ID" value="AAU37699.1"/>
    <property type="molecule type" value="Genomic_DNA"/>
</dbReference>
<dbReference type="RefSeq" id="WP_011200267.1">
    <property type="nucleotide sequence ID" value="NC_006300.1"/>
</dbReference>
<dbReference type="SMR" id="Q65TL1"/>
<dbReference type="STRING" id="221988.MS1092"/>
<dbReference type="KEGG" id="msu:MS1092"/>
<dbReference type="eggNOG" id="COG3422">
    <property type="taxonomic scope" value="Bacteria"/>
</dbReference>
<dbReference type="HOGENOM" id="CLU_163886_0_0_6"/>
<dbReference type="OrthoDB" id="9802792at2"/>
<dbReference type="Proteomes" id="UP000000607">
    <property type="component" value="Chromosome"/>
</dbReference>
<dbReference type="Gene3D" id="2.30.29.80">
    <property type="match status" value="1"/>
</dbReference>
<dbReference type="InterPro" id="IPR010879">
    <property type="entry name" value="DUF1508"/>
</dbReference>
<dbReference type="InterPro" id="IPR051141">
    <property type="entry name" value="UPF0339_domain"/>
</dbReference>
<dbReference type="InterPro" id="IPR036913">
    <property type="entry name" value="YegP-like_sf"/>
</dbReference>
<dbReference type="PANTHER" id="PTHR40606">
    <property type="match status" value="1"/>
</dbReference>
<dbReference type="PANTHER" id="PTHR40606:SF1">
    <property type="entry name" value="UPF0339 PROTEIN YEGP"/>
    <property type="match status" value="1"/>
</dbReference>
<dbReference type="Pfam" id="PF07411">
    <property type="entry name" value="DUF1508"/>
    <property type="match status" value="2"/>
</dbReference>
<dbReference type="SUPFAM" id="SSF160113">
    <property type="entry name" value="YegP-like"/>
    <property type="match status" value="2"/>
</dbReference>
<protein>
    <recommendedName>
        <fullName>UPF0339 protein MS1092</fullName>
    </recommendedName>
</protein>